<name>ACPS_RHOCS</name>
<organism>
    <name type="scientific">Rhodospirillum centenum (strain ATCC 51521 / SW)</name>
    <dbReference type="NCBI Taxonomy" id="414684"/>
    <lineage>
        <taxon>Bacteria</taxon>
        <taxon>Pseudomonadati</taxon>
        <taxon>Pseudomonadota</taxon>
        <taxon>Alphaproteobacteria</taxon>
        <taxon>Rhodospirillales</taxon>
        <taxon>Rhodospirillaceae</taxon>
        <taxon>Rhodospirillum</taxon>
    </lineage>
</organism>
<protein>
    <recommendedName>
        <fullName evidence="1">Holo-[acyl-carrier-protein] synthase</fullName>
        <shortName evidence="1">Holo-ACP synthase</shortName>
        <ecNumber evidence="1">2.7.8.7</ecNumber>
    </recommendedName>
    <alternativeName>
        <fullName evidence="1">4'-phosphopantetheinyl transferase AcpS</fullName>
    </alternativeName>
</protein>
<proteinExistence type="inferred from homology"/>
<keyword id="KW-0963">Cytoplasm</keyword>
<keyword id="KW-0275">Fatty acid biosynthesis</keyword>
<keyword id="KW-0276">Fatty acid metabolism</keyword>
<keyword id="KW-0444">Lipid biosynthesis</keyword>
<keyword id="KW-0443">Lipid metabolism</keyword>
<keyword id="KW-0460">Magnesium</keyword>
<keyword id="KW-0479">Metal-binding</keyword>
<keyword id="KW-1185">Reference proteome</keyword>
<keyword id="KW-0808">Transferase</keyword>
<reference key="1">
    <citation type="submission" date="2007-03" db="EMBL/GenBank/DDBJ databases">
        <title>Genome sequence of Rhodospirillum centenum.</title>
        <authorList>
            <person name="Touchman J.W."/>
            <person name="Bauer C."/>
            <person name="Blankenship R.E."/>
        </authorList>
    </citation>
    <scope>NUCLEOTIDE SEQUENCE [LARGE SCALE GENOMIC DNA]</scope>
    <source>
        <strain>ATCC 51521 / SW</strain>
    </source>
</reference>
<accession>B6IN03</accession>
<dbReference type="EC" id="2.7.8.7" evidence="1"/>
<dbReference type="EMBL" id="CP000613">
    <property type="protein sequence ID" value="ACI98900.1"/>
    <property type="molecule type" value="Genomic_DNA"/>
</dbReference>
<dbReference type="RefSeq" id="WP_012566686.1">
    <property type="nucleotide sequence ID" value="NC_011420.2"/>
</dbReference>
<dbReference type="SMR" id="B6IN03"/>
<dbReference type="STRING" id="414684.RC1_1496"/>
<dbReference type="KEGG" id="rce:RC1_1496"/>
<dbReference type="eggNOG" id="COG0736">
    <property type="taxonomic scope" value="Bacteria"/>
</dbReference>
<dbReference type="HOGENOM" id="CLU_089696_0_2_5"/>
<dbReference type="OrthoDB" id="517356at2"/>
<dbReference type="Proteomes" id="UP000001591">
    <property type="component" value="Chromosome"/>
</dbReference>
<dbReference type="GO" id="GO:0005737">
    <property type="term" value="C:cytoplasm"/>
    <property type="evidence" value="ECO:0007669"/>
    <property type="project" value="UniProtKB-SubCell"/>
</dbReference>
<dbReference type="GO" id="GO:0008897">
    <property type="term" value="F:holo-[acyl-carrier-protein] synthase activity"/>
    <property type="evidence" value="ECO:0007669"/>
    <property type="project" value="UniProtKB-UniRule"/>
</dbReference>
<dbReference type="GO" id="GO:0000287">
    <property type="term" value="F:magnesium ion binding"/>
    <property type="evidence" value="ECO:0007669"/>
    <property type="project" value="UniProtKB-UniRule"/>
</dbReference>
<dbReference type="GO" id="GO:0006633">
    <property type="term" value="P:fatty acid biosynthetic process"/>
    <property type="evidence" value="ECO:0007669"/>
    <property type="project" value="UniProtKB-UniRule"/>
</dbReference>
<dbReference type="Gene3D" id="3.90.470.20">
    <property type="entry name" value="4'-phosphopantetheinyl transferase domain"/>
    <property type="match status" value="1"/>
</dbReference>
<dbReference type="HAMAP" id="MF_00101">
    <property type="entry name" value="AcpS"/>
    <property type="match status" value="1"/>
</dbReference>
<dbReference type="InterPro" id="IPR008278">
    <property type="entry name" value="4-PPantetheinyl_Trfase_dom"/>
</dbReference>
<dbReference type="InterPro" id="IPR037143">
    <property type="entry name" value="4-PPantetheinyl_Trfase_dom_sf"/>
</dbReference>
<dbReference type="InterPro" id="IPR002582">
    <property type="entry name" value="ACPS"/>
</dbReference>
<dbReference type="InterPro" id="IPR004568">
    <property type="entry name" value="Ppantetheine-prot_Trfase_dom"/>
</dbReference>
<dbReference type="NCBIfam" id="TIGR00516">
    <property type="entry name" value="acpS"/>
    <property type="match status" value="1"/>
</dbReference>
<dbReference type="NCBIfam" id="TIGR00556">
    <property type="entry name" value="pantethn_trn"/>
    <property type="match status" value="1"/>
</dbReference>
<dbReference type="Pfam" id="PF01648">
    <property type="entry name" value="ACPS"/>
    <property type="match status" value="1"/>
</dbReference>
<dbReference type="SUPFAM" id="SSF56214">
    <property type="entry name" value="4'-phosphopantetheinyl transferase"/>
    <property type="match status" value="1"/>
</dbReference>
<gene>
    <name evidence="1" type="primary">acpS</name>
    <name type="ordered locus">RC1_1496</name>
</gene>
<sequence length="141" mass="15367">MILGIGNDLVDVRRIERTIERFGDRFLDRVFTEAERRRAERRSAAGPHSPRAATYAKRFAAKEACAKALGTGLNKGVYWRDMGVVNLPGGRPTLALTGGALERLRQITPPGMVAEIHLTLTDELPIAQAIVLISAVPAPQP</sequence>
<comment type="function">
    <text evidence="1">Transfers the 4'-phosphopantetheine moiety from coenzyme A to a Ser of acyl-carrier-protein.</text>
</comment>
<comment type="catalytic activity">
    <reaction evidence="1">
        <text>apo-[ACP] + CoA = holo-[ACP] + adenosine 3',5'-bisphosphate + H(+)</text>
        <dbReference type="Rhea" id="RHEA:12068"/>
        <dbReference type="Rhea" id="RHEA-COMP:9685"/>
        <dbReference type="Rhea" id="RHEA-COMP:9690"/>
        <dbReference type="ChEBI" id="CHEBI:15378"/>
        <dbReference type="ChEBI" id="CHEBI:29999"/>
        <dbReference type="ChEBI" id="CHEBI:57287"/>
        <dbReference type="ChEBI" id="CHEBI:58343"/>
        <dbReference type="ChEBI" id="CHEBI:64479"/>
        <dbReference type="EC" id="2.7.8.7"/>
    </reaction>
</comment>
<comment type="cofactor">
    <cofactor evidence="1">
        <name>Mg(2+)</name>
        <dbReference type="ChEBI" id="CHEBI:18420"/>
    </cofactor>
</comment>
<comment type="subcellular location">
    <subcellularLocation>
        <location evidence="1">Cytoplasm</location>
    </subcellularLocation>
</comment>
<comment type="similarity">
    <text evidence="1">Belongs to the P-Pant transferase superfamily. AcpS family.</text>
</comment>
<feature type="chain" id="PRO_1000093908" description="Holo-[acyl-carrier-protein] synthase">
    <location>
        <begin position="1"/>
        <end position="141"/>
    </location>
</feature>
<feature type="binding site" evidence="1">
    <location>
        <position position="8"/>
    </location>
    <ligand>
        <name>Mg(2+)</name>
        <dbReference type="ChEBI" id="CHEBI:18420"/>
    </ligand>
</feature>
<feature type="binding site" evidence="1">
    <location>
        <position position="63"/>
    </location>
    <ligand>
        <name>Mg(2+)</name>
        <dbReference type="ChEBI" id="CHEBI:18420"/>
    </ligand>
</feature>
<evidence type="ECO:0000255" key="1">
    <source>
        <dbReference type="HAMAP-Rule" id="MF_00101"/>
    </source>
</evidence>